<keyword id="KW-0067">ATP-binding</keyword>
<keyword id="KW-0997">Cell inner membrane</keyword>
<keyword id="KW-1003">Cell membrane</keyword>
<keyword id="KW-0472">Membrane</keyword>
<keyword id="KW-0547">Nucleotide-binding</keyword>
<keyword id="KW-1278">Translocase</keyword>
<keyword id="KW-0813">Transport</keyword>
<evidence type="ECO:0000255" key="1">
    <source>
        <dbReference type="PROSITE-ProRule" id="PRU00434"/>
    </source>
</evidence>
<evidence type="ECO:0000305" key="2"/>
<accession>Q576E0</accession>
<dbReference type="EC" id="7.-.-.-"/>
<dbReference type="EMBL" id="AE017224">
    <property type="protein sequence ID" value="AAX76494.1"/>
    <property type="molecule type" value="Genomic_DNA"/>
</dbReference>
<dbReference type="RefSeq" id="WP_002972232.1">
    <property type="nucleotide sequence ID" value="NC_006933.1"/>
</dbReference>
<dbReference type="SMR" id="Q576E0"/>
<dbReference type="EnsemblBacteria" id="AAX76494">
    <property type="protein sequence ID" value="AAX76494"/>
    <property type="gene ID" value="BruAb2_1123"/>
</dbReference>
<dbReference type="KEGG" id="bmb:BruAb2_1123"/>
<dbReference type="HOGENOM" id="CLU_000604_1_22_5"/>
<dbReference type="Proteomes" id="UP000000540">
    <property type="component" value="Chromosome II"/>
</dbReference>
<dbReference type="GO" id="GO:0005886">
    <property type="term" value="C:plasma membrane"/>
    <property type="evidence" value="ECO:0007669"/>
    <property type="project" value="UniProtKB-SubCell"/>
</dbReference>
<dbReference type="GO" id="GO:0005524">
    <property type="term" value="F:ATP binding"/>
    <property type="evidence" value="ECO:0007669"/>
    <property type="project" value="UniProtKB-KW"/>
</dbReference>
<dbReference type="GO" id="GO:0016887">
    <property type="term" value="F:ATP hydrolysis activity"/>
    <property type="evidence" value="ECO:0007669"/>
    <property type="project" value="InterPro"/>
</dbReference>
<dbReference type="CDD" id="cd03293">
    <property type="entry name" value="ABC_NrtD_SsuB_transporters"/>
    <property type="match status" value="1"/>
</dbReference>
<dbReference type="Gene3D" id="3.40.50.300">
    <property type="entry name" value="P-loop containing nucleotide triphosphate hydrolases"/>
    <property type="match status" value="1"/>
</dbReference>
<dbReference type="InterPro" id="IPR003593">
    <property type="entry name" value="AAA+_ATPase"/>
</dbReference>
<dbReference type="InterPro" id="IPR003439">
    <property type="entry name" value="ABC_transporter-like_ATP-bd"/>
</dbReference>
<dbReference type="InterPro" id="IPR050166">
    <property type="entry name" value="ABC_transporter_ATP-bind"/>
</dbReference>
<dbReference type="InterPro" id="IPR027417">
    <property type="entry name" value="P-loop_NTPase"/>
</dbReference>
<dbReference type="PANTHER" id="PTHR42788:SF13">
    <property type="entry name" value="ALIPHATIC SULFONATES IMPORT ATP-BINDING PROTEIN SSUB"/>
    <property type="match status" value="1"/>
</dbReference>
<dbReference type="PANTHER" id="PTHR42788">
    <property type="entry name" value="TAURINE IMPORT ATP-BINDING PROTEIN-RELATED"/>
    <property type="match status" value="1"/>
</dbReference>
<dbReference type="Pfam" id="PF00005">
    <property type="entry name" value="ABC_tran"/>
    <property type="match status" value="1"/>
</dbReference>
<dbReference type="SMART" id="SM00382">
    <property type="entry name" value="AAA"/>
    <property type="match status" value="1"/>
</dbReference>
<dbReference type="SUPFAM" id="SSF52540">
    <property type="entry name" value="P-loop containing nucleoside triphosphate hydrolases"/>
    <property type="match status" value="1"/>
</dbReference>
<dbReference type="PROSITE" id="PS50893">
    <property type="entry name" value="ABC_TRANSPORTER_2"/>
    <property type="match status" value="1"/>
</dbReference>
<gene>
    <name type="ordered locus">BruAb2_1123</name>
</gene>
<protein>
    <recommendedName>
        <fullName>Putative ATP-binding protein BruAb2_1123</fullName>
        <ecNumber>7.-.-.-</ecNumber>
    </recommendedName>
</protein>
<feature type="chain" id="PRO_0000284106" description="Putative ATP-binding protein BruAb2_1123">
    <location>
        <begin position="1"/>
        <end position="260"/>
    </location>
</feature>
<feature type="domain" description="ABC transporter" evidence="1">
    <location>
        <begin position="5"/>
        <end position="228"/>
    </location>
</feature>
<feature type="binding site" evidence="1">
    <location>
        <begin position="37"/>
        <end position="44"/>
    </location>
    <ligand>
        <name>ATP</name>
        <dbReference type="ChEBI" id="CHEBI:30616"/>
    </ligand>
</feature>
<organism>
    <name type="scientific">Brucella abortus biovar 1 (strain 9-941)</name>
    <dbReference type="NCBI Taxonomy" id="262698"/>
    <lineage>
        <taxon>Bacteria</taxon>
        <taxon>Pseudomonadati</taxon>
        <taxon>Pseudomonadota</taxon>
        <taxon>Alphaproteobacteria</taxon>
        <taxon>Hyphomicrobiales</taxon>
        <taxon>Brucellaceae</taxon>
        <taxon>Brucella/Ochrobactrum group</taxon>
        <taxon>Brucella</taxon>
    </lineage>
</organism>
<proteinExistence type="inferred from homology"/>
<comment type="function">
    <text evidence="2">Probably part of an ABC transporter complex. Probably Responsible for energy coupling to the transport system (Probable).</text>
</comment>
<comment type="subunit">
    <text evidence="2">The complex is composed of two ATP-binding proteins (BruAb2_1123), two transmembrane proteins (BruAb2_1124) and a solute-binding protein (BruAb2_1122).</text>
</comment>
<comment type="subcellular location">
    <subcellularLocation>
        <location evidence="2">Cell inner membrane</location>
        <topology evidence="2">Peripheral membrane protein</topology>
    </subcellularLocation>
</comment>
<comment type="similarity">
    <text evidence="2">Belongs to the ABC transporter superfamily.</text>
</comment>
<reference key="1">
    <citation type="journal article" date="2005" name="J. Bacteriol.">
        <title>Completion of the genome sequence of Brucella abortus and comparison to the highly similar genomes of Brucella melitensis and Brucella suis.</title>
        <authorList>
            <person name="Halling S.M."/>
            <person name="Peterson-Burch B.D."/>
            <person name="Bricker B.J."/>
            <person name="Zuerner R.L."/>
            <person name="Qing Z."/>
            <person name="Li L.-L."/>
            <person name="Kapur V."/>
            <person name="Alt D.P."/>
            <person name="Olsen S.C."/>
        </authorList>
    </citation>
    <scope>NUCLEOTIDE SEQUENCE [LARGE SCALE GENOMIC DNA]</scope>
    <source>
        <strain>9-941</strain>
    </source>
</reference>
<sequence length="260" mass="28698">MKPKISFNNVVMRYGGFLALDRLNLDIADGEFVTVVGPSGCGKSTAMNIAAGLLQPSGGEILVGDKPVTGPGPERGVIFQQYALFPWLTVRQNVEFGLSVAGMSRVKRREISDHYLSLVGLTDFADALPKALSGGMKQRCAIARAYAAAPEILLMDEPFAALDALTRVHMQDQLLDAWSRERRTVMFITHDVDEAVYLANRVIVMAARPGRLDQIIPVDLPYPRTEAIRLSPEFAAIRNRVWHAVYHQQPQTDQQSSHGQ</sequence>
<name>Y3423_BRUAB</name>